<dbReference type="EC" id="3.1.3.46" evidence="3"/>
<dbReference type="EMBL" id="BC097765">
    <property type="protein sequence ID" value="AAH97765.1"/>
    <property type="molecule type" value="mRNA"/>
</dbReference>
<dbReference type="RefSeq" id="NP_001089513.1">
    <property type="nucleotide sequence ID" value="NM_001096044.1"/>
</dbReference>
<dbReference type="SMR" id="Q4V7R0"/>
<dbReference type="DNASU" id="734566"/>
<dbReference type="GeneID" id="734566"/>
<dbReference type="KEGG" id="xla:734566"/>
<dbReference type="AGR" id="Xenbase:XB-GENE-1008476"/>
<dbReference type="CTD" id="734566"/>
<dbReference type="Xenbase" id="XB-GENE-1008476">
    <property type="gene designation" value="tigar.S"/>
</dbReference>
<dbReference type="OrthoDB" id="354304at2759"/>
<dbReference type="Proteomes" id="UP000186698">
    <property type="component" value="Chromosome 3S"/>
</dbReference>
<dbReference type="Bgee" id="734566">
    <property type="expression patterns" value="Expressed in testis and 19 other cell types or tissues"/>
</dbReference>
<dbReference type="GO" id="GO:0005737">
    <property type="term" value="C:cytoplasm"/>
    <property type="evidence" value="ECO:0000250"/>
    <property type="project" value="UniProtKB"/>
</dbReference>
<dbReference type="GO" id="GO:0005829">
    <property type="term" value="C:cytosol"/>
    <property type="evidence" value="ECO:0000318"/>
    <property type="project" value="GO_Central"/>
</dbReference>
<dbReference type="GO" id="GO:0005741">
    <property type="term" value="C:mitochondrial outer membrane"/>
    <property type="evidence" value="ECO:0000250"/>
    <property type="project" value="UniProtKB"/>
</dbReference>
<dbReference type="GO" id="GO:0005739">
    <property type="term" value="C:mitochondrion"/>
    <property type="evidence" value="ECO:0000250"/>
    <property type="project" value="UniProtKB"/>
</dbReference>
<dbReference type="GO" id="GO:0005634">
    <property type="term" value="C:nucleus"/>
    <property type="evidence" value="ECO:0000250"/>
    <property type="project" value="UniProtKB"/>
</dbReference>
<dbReference type="GO" id="GO:0004331">
    <property type="term" value="F:fructose-2,6-bisphosphate 2-phosphatase activity"/>
    <property type="evidence" value="ECO:0000250"/>
    <property type="project" value="UniProtKB"/>
</dbReference>
<dbReference type="GO" id="GO:0006915">
    <property type="term" value="P:apoptotic process"/>
    <property type="evidence" value="ECO:0007669"/>
    <property type="project" value="UniProtKB-KW"/>
</dbReference>
<dbReference type="GO" id="GO:0006914">
    <property type="term" value="P:autophagy"/>
    <property type="evidence" value="ECO:0007669"/>
    <property type="project" value="UniProtKB-KW"/>
</dbReference>
<dbReference type="GO" id="GO:0045820">
    <property type="term" value="P:negative regulation of glycolytic process"/>
    <property type="evidence" value="ECO:0000318"/>
    <property type="project" value="GO_Central"/>
</dbReference>
<dbReference type="GO" id="GO:0043456">
    <property type="term" value="P:regulation of pentose-phosphate shunt"/>
    <property type="evidence" value="ECO:0000318"/>
    <property type="project" value="GO_Central"/>
</dbReference>
<dbReference type="CDD" id="cd07067">
    <property type="entry name" value="HP_PGM_like"/>
    <property type="match status" value="1"/>
</dbReference>
<dbReference type="FunFam" id="3.40.50.1240:FF:000026">
    <property type="entry name" value="Putative fructose-2,6-bisphosphatase TIGAR"/>
    <property type="match status" value="1"/>
</dbReference>
<dbReference type="Gene3D" id="3.40.50.1240">
    <property type="entry name" value="Phosphoglycerate mutase-like"/>
    <property type="match status" value="1"/>
</dbReference>
<dbReference type="InterPro" id="IPR013078">
    <property type="entry name" value="His_Pase_superF_clade-1"/>
</dbReference>
<dbReference type="InterPro" id="IPR029033">
    <property type="entry name" value="His_PPase_superfam"/>
</dbReference>
<dbReference type="InterPro" id="IPR001345">
    <property type="entry name" value="PG/BPGM_mutase_AS"/>
</dbReference>
<dbReference type="InterPro" id="IPR051695">
    <property type="entry name" value="Phosphoglycerate_Mutase"/>
</dbReference>
<dbReference type="PANTHER" id="PTHR46517">
    <property type="entry name" value="FRUCTOSE-2,6-BISPHOSPHATASE TIGAR"/>
    <property type="match status" value="1"/>
</dbReference>
<dbReference type="PANTHER" id="PTHR46517:SF1">
    <property type="entry name" value="FRUCTOSE-2,6-BISPHOSPHATASE TIGAR"/>
    <property type="match status" value="1"/>
</dbReference>
<dbReference type="Pfam" id="PF00300">
    <property type="entry name" value="His_Phos_1"/>
    <property type="match status" value="1"/>
</dbReference>
<dbReference type="SMART" id="SM00855">
    <property type="entry name" value="PGAM"/>
    <property type="match status" value="1"/>
</dbReference>
<dbReference type="SUPFAM" id="SSF53254">
    <property type="entry name" value="Phosphoglycerate mutase-like"/>
    <property type="match status" value="1"/>
</dbReference>
<dbReference type="PROSITE" id="PS00175">
    <property type="entry name" value="PG_MUTASE"/>
    <property type="match status" value="1"/>
</dbReference>
<keyword id="KW-0053">Apoptosis</keyword>
<keyword id="KW-0072">Autophagy</keyword>
<keyword id="KW-0963">Cytoplasm</keyword>
<keyword id="KW-0378">Hydrolase</keyword>
<keyword id="KW-0496">Mitochondrion</keyword>
<keyword id="KW-0539">Nucleus</keyword>
<keyword id="KW-1185">Reference proteome</keyword>
<sequence length="275" mass="30658">MARFALTIVRHGETRYNKEKLLQGQGIDEPLSEMGFKQADAAGRFLSNVRFTHVFSSDLIRAKQTACAIMRNNQLSEDIKIMYDPRLRERKYGDAEGRPLSELKVMAKKAGGQCPSYTPPGGETLEQVRACAKDFFEYLCQLVMAESSVKEKSELGASGMVGIMSTDLAPFVNHNKEPTIFGESRDVTLDASVLLVSHGAYMRNWIKYFVEDLQFTFPPELKKSRELSVSPNTGISHFIVTVGSGATRKPEIQCVCINLHGHLSDIDADTSHYQV</sequence>
<proteinExistence type="evidence at transcript level"/>
<organism>
    <name type="scientific">Xenopus laevis</name>
    <name type="common">African clawed frog</name>
    <dbReference type="NCBI Taxonomy" id="8355"/>
    <lineage>
        <taxon>Eukaryota</taxon>
        <taxon>Metazoa</taxon>
        <taxon>Chordata</taxon>
        <taxon>Craniata</taxon>
        <taxon>Vertebrata</taxon>
        <taxon>Euteleostomi</taxon>
        <taxon>Amphibia</taxon>
        <taxon>Batrachia</taxon>
        <taxon>Anura</taxon>
        <taxon>Pipoidea</taxon>
        <taxon>Pipidae</taxon>
        <taxon>Xenopodinae</taxon>
        <taxon>Xenopus</taxon>
        <taxon>Xenopus</taxon>
    </lineage>
</organism>
<feature type="chain" id="PRO_0000363069" description="Fructose-2,6-bisphosphatase TIGAR">
    <location>
        <begin position="1"/>
        <end position="275"/>
    </location>
</feature>
<feature type="active site" description="Tele-phosphohistidine intermediate" evidence="1">
    <location>
        <position position="11"/>
    </location>
</feature>
<feature type="active site" description="Proton donor/acceptor" evidence="1">
    <location>
        <position position="89"/>
    </location>
</feature>
<feature type="site" description="Transition state stabilizer" evidence="1">
    <location>
        <position position="198"/>
    </location>
</feature>
<accession>Q4V7R0</accession>
<name>TIGAR_XENLA</name>
<protein>
    <recommendedName>
        <fullName evidence="4">Fructose-2,6-bisphosphatase TIGAR</fullName>
        <ecNumber evidence="3">3.1.3.46</ecNumber>
    </recommendedName>
    <alternativeName>
        <fullName evidence="3">TP53-induced glycolysis and apoptosis regulator</fullName>
    </alternativeName>
</protein>
<gene>
    <name evidence="3" type="primary">tigar</name>
</gene>
<comment type="function">
    <text evidence="2 3">Fructose-bisphosphatase hydrolyzing fructose-2,6-bisphosphate as well as fructose-1,6-bisphosphate. Acts as a negative regulator of glycolysis by lowering intracellular levels of fructose-2,6-bisphosphate in a p53/TP53-dependent manner, resulting in the pentose phosphate pathway (PPP) activation and NADPH production. Contributes to the generation of reduced glutathione to cause a decrease in intracellular reactive oxygen species (ROS) content, correlating with its ability to protect cells from oxidative or metabolic stress-induced cell death. May play a role in mitophagy inhibition.</text>
</comment>
<comment type="catalytic activity">
    <reaction evidence="3">
        <text>beta-D-fructose 2,6-bisphosphate + H2O = beta-D-fructose 6-phosphate + phosphate</text>
        <dbReference type="Rhea" id="RHEA:17289"/>
        <dbReference type="ChEBI" id="CHEBI:15377"/>
        <dbReference type="ChEBI" id="CHEBI:43474"/>
        <dbReference type="ChEBI" id="CHEBI:57634"/>
        <dbReference type="ChEBI" id="CHEBI:58579"/>
        <dbReference type="EC" id="3.1.3.46"/>
    </reaction>
</comment>
<comment type="subcellular location">
    <subcellularLocation>
        <location evidence="2">Cytoplasm</location>
    </subcellularLocation>
    <subcellularLocation>
        <location evidence="3">Nucleus</location>
    </subcellularLocation>
    <subcellularLocation>
        <location evidence="2">Mitochondrion</location>
    </subcellularLocation>
</comment>
<comment type="similarity">
    <text evidence="4">Belongs to the phosphoglycerate mutase family.</text>
</comment>
<comment type="caution">
    <text evidence="4">Not expected to have any kinase activity.</text>
</comment>
<reference key="1">
    <citation type="submission" date="2005-06" db="EMBL/GenBank/DDBJ databases">
        <authorList>
            <consortium name="NIH - Xenopus Gene Collection (XGC) project"/>
        </authorList>
    </citation>
    <scope>NUCLEOTIDE SEQUENCE [LARGE SCALE MRNA]</scope>
    <source>
        <tissue>Egg</tissue>
    </source>
</reference>
<evidence type="ECO:0000250" key="1">
    <source>
        <dbReference type="UniProtKB" id="Q7ZVE3"/>
    </source>
</evidence>
<evidence type="ECO:0000250" key="2">
    <source>
        <dbReference type="UniProtKB" id="Q8BZA9"/>
    </source>
</evidence>
<evidence type="ECO:0000250" key="3">
    <source>
        <dbReference type="UniProtKB" id="Q9NQ88"/>
    </source>
</evidence>
<evidence type="ECO:0000305" key="4"/>